<keyword id="KW-0002">3D-structure</keyword>
<keyword id="KW-0966">Cell projection</keyword>
<keyword id="KW-0969">Cilium</keyword>
<keyword id="KW-0175">Coiled coil</keyword>
<keyword id="KW-0963">Cytoplasm</keyword>
<keyword id="KW-0206">Cytoskeleton</keyword>
<keyword id="KW-0282">Flagellum</keyword>
<keyword id="KW-0469">Meiosis</keyword>
<keyword id="KW-0539">Nucleus</keyword>
<keyword id="KW-1185">Reference proteome</keyword>
<reference evidence="8" key="1">
    <citation type="submission" date="2018-03" db="EMBL/GenBank/DDBJ databases">
        <title>ARS-UCD1.2.</title>
        <authorList>
            <person name="Rosen B.D."/>
            <person name="Bickhart D.M."/>
            <person name="Koren S."/>
            <person name="Schnabel R.D."/>
            <person name="Hall R."/>
            <person name="Zimin A."/>
            <person name="Dreischer C."/>
            <person name="Schultheiss S."/>
            <person name="Schroeder S.G."/>
            <person name="Elsik C.G."/>
            <person name="Couldrey C."/>
            <person name="Liu G.E."/>
            <person name="Van Tassell C.P."/>
            <person name="Phillippy A.M."/>
            <person name="Smith T.P.L."/>
            <person name="Medrano J.F."/>
        </authorList>
    </citation>
    <scope>NUCLEOTIDE SEQUENCE [LARGE SCALE GENOMIC DNA]</scope>
    <source>
        <strain evidence="8">Hereford</strain>
    </source>
</reference>
<reference key="2">
    <citation type="submission" date="2006-01" db="EMBL/GenBank/DDBJ databases">
        <authorList>
            <consortium name="NIH - Mammalian Gene Collection (MGC) project"/>
        </authorList>
    </citation>
    <scope>NUCLEOTIDE SEQUENCE [LARGE SCALE MRNA]</scope>
    <source>
        <strain>Hereford</strain>
        <tissue>Testis</tissue>
    </source>
</reference>
<reference evidence="9" key="3">
    <citation type="journal article" date="2021" name="Cell">
        <title>De novo identification of mammalian ciliary motility proteins using cryo-EM.</title>
        <authorList>
            <person name="Gui M."/>
            <person name="Farley H."/>
            <person name="Anujan P."/>
            <person name="Anderson J.R."/>
            <person name="Maxwell D.W."/>
            <person name="Whitchurch J.B."/>
            <person name="Botsch J.J."/>
            <person name="Qiu T."/>
            <person name="Meleppattu S."/>
            <person name="Singh S.K."/>
            <person name="Zhang Q."/>
            <person name="Thompson J."/>
            <person name="Lucas J.S."/>
            <person name="Bingle C.D."/>
            <person name="Norris D.P."/>
            <person name="Roy S."/>
            <person name="Brown A."/>
        </authorList>
    </citation>
    <scope>STRUCTURE BY ELECTRON MICROSCOPY (3.40 ANGSTROMS)</scope>
    <scope>SUBCELLULAR LOCATION</scope>
    <scope>TISSUE SPECIFICITY</scope>
</reference>
<reference evidence="10" key="4">
    <citation type="journal article" date="2023" name="Cell">
        <title>Structural specializations of the sperm tail.</title>
        <authorList>
            <person name="Leung M.R."/>
            <person name="Zeng J."/>
            <person name="Wang X."/>
            <person name="Roelofs M.C."/>
            <person name="Huang W."/>
            <person name="Zenezini Chiozzi R."/>
            <person name="Hevler J.F."/>
            <person name="Heck A.J.R."/>
            <person name="Dutcher S.K."/>
            <person name="Brown A."/>
            <person name="Zhang R."/>
            <person name="Zeev-Ben-Mordehai T."/>
        </authorList>
    </citation>
    <scope>STRUCTURE BY ELECTRON MICROSCOPY (3.60 ANGSTROMS)</scope>
    <scope>SUBUNIT</scope>
    <scope>SUBCELLULAR LOCATION</scope>
</reference>
<sequence>MASIRRTLSFSERHQKLVDINYCKKLHVEALQRLQNQTRDQMVQNENDDRAERKRFLRLLQDEQFELDMEEAIQKAEENKRLRELQLAQEEKLATELAKLKRESLKDEKLRQQVRENSAELRELEKKLKAAYMNKERAAQIAEKDAIKYGQMKRDAEIARTMMEEHERLIKEESAAEDKRNQAKAQYSHDLEKQLEEQGKKKQEAYEQLLKEKLMIDEIVRKIYEEDQLERQQRLEKMNTTRRYIEEFQKEQALWRKKKREEMEEENRKIIEFAKLQQQREEDRMAKVQEKVKKKRLQLKNMLTQRLEEMLRQREDLEQVRQELYQEEQAEIYKKKLEEEAEEKLRKQKELKQDFMDQMALKELILQAAKEEEETFRKAMLAKFAEDDRIELMNAQKPRMKQLEHKRAVEKLIEERRNQFLADKQRELEEWQWQQRRQGCINAIVEEERLKLLKEHATKLLGYLPKGVFKNEDDIDMLGEEFRKAYQKRSEICEK</sequence>
<accession>Q2KIQ2</accession>
<accession>F1MH18</accession>
<dbReference type="EMBL" id="BC112553">
    <property type="protein sequence ID" value="AAI12554.1"/>
    <property type="status" value="ALT_FRAME"/>
    <property type="molecule type" value="mRNA"/>
</dbReference>
<dbReference type="RefSeq" id="NP_001039803.2">
    <property type="nucleotide sequence ID" value="NM_001046338.2"/>
</dbReference>
<dbReference type="PDB" id="7RRO">
    <property type="method" value="EM"/>
    <property type="resolution" value="3.40 A"/>
    <property type="chains" value="A/B=1-494"/>
</dbReference>
<dbReference type="PDB" id="8OTZ">
    <property type="method" value="EM"/>
    <property type="resolution" value="3.60 A"/>
    <property type="chains" value="Br/Bs=1-495"/>
</dbReference>
<dbReference type="PDB" id="9CPB">
    <property type="method" value="EM"/>
    <property type="resolution" value="3.52 A"/>
    <property type="chains" value="4F/4G=1-495"/>
</dbReference>
<dbReference type="PDBsum" id="7RRO"/>
<dbReference type="PDBsum" id="8OTZ"/>
<dbReference type="PDBsum" id="9CPB"/>
<dbReference type="EMDB" id="EMD-17187"/>
<dbReference type="EMDB" id="EMD-24664"/>
<dbReference type="EMDB" id="EMD-45801"/>
<dbReference type="EMDB" id="EMD-50664"/>
<dbReference type="SMR" id="Q2KIQ2"/>
<dbReference type="FunCoup" id="Q2KIQ2">
    <property type="interactions" value="388"/>
</dbReference>
<dbReference type="STRING" id="9913.ENSBTAP00000000337"/>
<dbReference type="PaxDb" id="9913-ENSBTAP00000000337"/>
<dbReference type="GeneID" id="532884"/>
<dbReference type="KEGG" id="bta:532884"/>
<dbReference type="CTD" id="55329"/>
<dbReference type="VEuPathDB" id="HostDB:ENSBTAG00000000271"/>
<dbReference type="eggNOG" id="ENOG502QS9D">
    <property type="taxonomic scope" value="Eukaryota"/>
</dbReference>
<dbReference type="HOGENOM" id="CLU_034848_0_0_1"/>
<dbReference type="InParanoid" id="Q2KIQ2"/>
<dbReference type="OrthoDB" id="197839at2759"/>
<dbReference type="TreeFam" id="TF329219"/>
<dbReference type="Proteomes" id="UP000009136">
    <property type="component" value="Chromosome 10"/>
</dbReference>
<dbReference type="Bgee" id="ENSBTAG00000000271">
    <property type="expression patterns" value="Expressed in thymus and 106 other cell types or tissues"/>
</dbReference>
<dbReference type="GO" id="GO:0160111">
    <property type="term" value="C:axonemal A tubule inner sheath"/>
    <property type="evidence" value="ECO:0000250"/>
    <property type="project" value="UniProtKB"/>
</dbReference>
<dbReference type="GO" id="GO:0005879">
    <property type="term" value="C:axonemal microtubule"/>
    <property type="evidence" value="ECO:0000314"/>
    <property type="project" value="UniProtKB"/>
</dbReference>
<dbReference type="GO" id="GO:0005930">
    <property type="term" value="C:axoneme"/>
    <property type="evidence" value="ECO:0000250"/>
    <property type="project" value="UniProtKB"/>
</dbReference>
<dbReference type="GO" id="GO:0031514">
    <property type="term" value="C:motile cilium"/>
    <property type="evidence" value="ECO:0000318"/>
    <property type="project" value="GO_Central"/>
</dbReference>
<dbReference type="GO" id="GO:0005634">
    <property type="term" value="C:nucleus"/>
    <property type="evidence" value="ECO:0007669"/>
    <property type="project" value="UniProtKB-SubCell"/>
</dbReference>
<dbReference type="GO" id="GO:0036126">
    <property type="term" value="C:sperm flagellum"/>
    <property type="evidence" value="ECO:0000250"/>
    <property type="project" value="UniProtKB"/>
</dbReference>
<dbReference type="GO" id="GO:0044782">
    <property type="term" value="P:cilium organization"/>
    <property type="evidence" value="ECO:0000318"/>
    <property type="project" value="GO_Central"/>
</dbReference>
<dbReference type="GO" id="GO:0030317">
    <property type="term" value="P:flagellated sperm motility"/>
    <property type="evidence" value="ECO:0000250"/>
    <property type="project" value="UniProtKB"/>
</dbReference>
<dbReference type="GO" id="GO:0051321">
    <property type="term" value="P:meiotic cell cycle"/>
    <property type="evidence" value="ECO:0007669"/>
    <property type="project" value="UniProtKB-KW"/>
</dbReference>
<dbReference type="InterPro" id="IPR026504">
    <property type="entry name" value="MNS1"/>
</dbReference>
<dbReference type="InterPro" id="IPR043597">
    <property type="entry name" value="TPH_dom"/>
</dbReference>
<dbReference type="PANTHER" id="PTHR19265">
    <property type="entry name" value="MEIOSIS-SPECIFIC NUCLEAR STRUCTURAL PROTEIN 1"/>
    <property type="match status" value="1"/>
</dbReference>
<dbReference type="PANTHER" id="PTHR19265:SF0">
    <property type="entry name" value="MEIOSIS-SPECIFIC NUCLEAR STRUCTURAL PROTEIN 1"/>
    <property type="match status" value="1"/>
</dbReference>
<dbReference type="Pfam" id="PF13868">
    <property type="entry name" value="TPH"/>
    <property type="match status" value="1"/>
</dbReference>
<proteinExistence type="evidence at protein level"/>
<evidence type="ECO:0000250" key="1">
    <source>
        <dbReference type="UniProtKB" id="Q61884"/>
    </source>
</evidence>
<evidence type="ECO:0000250" key="2">
    <source>
        <dbReference type="UniProtKB" id="Q8NEH6"/>
    </source>
</evidence>
<evidence type="ECO:0000255" key="3"/>
<evidence type="ECO:0000256" key="4">
    <source>
        <dbReference type="SAM" id="MobiDB-lite"/>
    </source>
</evidence>
<evidence type="ECO:0000269" key="5">
    <source>
    </source>
</evidence>
<evidence type="ECO:0000269" key="6">
    <source>
    </source>
</evidence>
<evidence type="ECO:0000305" key="7"/>
<evidence type="ECO:0000312" key="8">
    <source>
        <dbReference type="Proteomes" id="UP000009136"/>
    </source>
</evidence>
<evidence type="ECO:0007744" key="9">
    <source>
        <dbReference type="PDB" id="7RRO"/>
    </source>
</evidence>
<evidence type="ECO:0007744" key="10">
    <source>
        <dbReference type="PDB" id="8OTZ"/>
    </source>
</evidence>
<feature type="chain" id="PRO_0000298920" description="Meiosis-specific nuclear structural protein 1">
    <location>
        <begin position="1"/>
        <end position="495"/>
    </location>
</feature>
<feature type="region of interest" description="Interaction with BBOF1" evidence="1">
    <location>
        <begin position="1"/>
        <end position="315"/>
    </location>
</feature>
<feature type="region of interest" description="Disordered" evidence="4">
    <location>
        <begin position="172"/>
        <end position="199"/>
    </location>
</feature>
<feature type="coiled-coil region" evidence="3">
    <location>
        <begin position="61"/>
        <end position="215"/>
    </location>
</feature>
<feature type="coiled-coil region" evidence="3">
    <location>
        <begin position="245"/>
        <end position="361"/>
    </location>
</feature>
<feature type="sequence conflict" description="In Ref. 1." evidence="7" ref="1">
    <original>G</original>
    <variation>E</variation>
    <location>
        <position position="150"/>
    </location>
</feature>
<feature type="sequence conflict" description="In Ref. 1." evidence="7" ref="1">
    <original>G</original>
    <variation>E</variation>
    <location>
        <position position="199"/>
    </location>
</feature>
<feature type="sequence conflict" description="In Ref. 1." evidence="7" ref="1">
    <original>KVKK</original>
    <variation>SEE</variation>
    <location>
        <begin position="291"/>
        <end position="294"/>
    </location>
</feature>
<feature type="sequence conflict" description="In Ref. 1." evidence="7" ref="1">
    <original>P</original>
    <variation>Q</variation>
    <location>
        <position position="398"/>
    </location>
</feature>
<protein>
    <recommendedName>
        <fullName>Meiosis-specific nuclear structural protein 1</fullName>
    </recommendedName>
</protein>
<organism>
    <name type="scientific">Bos taurus</name>
    <name type="common">Bovine</name>
    <dbReference type="NCBI Taxonomy" id="9913"/>
    <lineage>
        <taxon>Eukaryota</taxon>
        <taxon>Metazoa</taxon>
        <taxon>Chordata</taxon>
        <taxon>Craniata</taxon>
        <taxon>Vertebrata</taxon>
        <taxon>Euteleostomi</taxon>
        <taxon>Mammalia</taxon>
        <taxon>Eutheria</taxon>
        <taxon>Laurasiatheria</taxon>
        <taxon>Artiodactyla</taxon>
        <taxon>Ruminantia</taxon>
        <taxon>Pecora</taxon>
        <taxon>Bovidae</taxon>
        <taxon>Bovinae</taxon>
        <taxon>Bos</taxon>
    </lineage>
</organism>
<gene>
    <name type="primary">MNS1</name>
</gene>
<name>MNS1_BOVIN</name>
<comment type="function">
    <text evidence="1 2">Microtubule inner protein (MIP) part of the dynein-decorated doublet microtubules (DMTs) in cilia axoneme, which is required for motile cilia beating (By similarity). May play a role in the control of meiotic division and germ cell differentiation through regulation of pairing and recombination during meiosis (By similarity). Required for sperm flagella assembly (By similarity). May play a role in the assembly and function of the outer dynein arm-docking complex (ODA-DC). ODA-DC mediates outer dynein arms (ODA) binding onto the axonemal doublet microtubules (By similarity).</text>
</comment>
<comment type="subunit">
    <text evidence="1 2 6">Able to form oligomers. Microtubule inner protein component of sperm flagellar doublet microtubules (PubMed:37327785). Interacts with ODAD1 (By similarity). Interacts with BBOF1 (By similarity).</text>
</comment>
<comment type="subcellular location">
    <subcellularLocation>
        <location evidence="1">Nucleus</location>
    </subcellularLocation>
    <subcellularLocation>
        <location evidence="5">Cytoplasm</location>
        <location evidence="5">Cytoskeleton</location>
        <location evidence="5">Cilium axoneme</location>
    </subcellularLocation>
    <subcellularLocation>
        <location evidence="6">Cytoplasm</location>
        <location evidence="6">Cytoskeleton</location>
        <location evidence="6">Flagellum axoneme</location>
    </subcellularLocation>
    <text evidence="5">Microtubule inner protein (MIP) part of the dynein-decorated doublet microtubules (DMTs) in cilia axoneme.</text>
</comment>
<comment type="tissue specificity">
    <text evidence="5">Expressed in trachea multiciliated cells.</text>
</comment>
<comment type="similarity">
    <text evidence="7">Belongs to the MNS1 family.</text>
</comment>
<comment type="sequence caution" evidence="7">
    <conflict type="frameshift">
        <sequence resource="EMBL-CDS" id="AAI12554"/>
    </conflict>
</comment>